<dbReference type="EC" id="2.1.1.225"/>
<dbReference type="EMBL" id="DS480508">
    <property type="protein sequence ID" value="EDO14797.1"/>
    <property type="molecule type" value="Genomic_DNA"/>
</dbReference>
<dbReference type="RefSeq" id="XP_001642655.1">
    <property type="nucleotide sequence ID" value="XM_001642605.1"/>
</dbReference>
<dbReference type="FunCoup" id="A7TSF4">
    <property type="interactions" value="490"/>
</dbReference>
<dbReference type="STRING" id="436907.A7TSF4"/>
<dbReference type="GeneID" id="5542827"/>
<dbReference type="KEGG" id="vpo:Kpol_1076p3"/>
<dbReference type="eggNOG" id="KOG2811">
    <property type="taxonomic scope" value="Eukaryota"/>
</dbReference>
<dbReference type="HOGENOM" id="CLU_027610_0_0_1"/>
<dbReference type="InParanoid" id="A7TSF4"/>
<dbReference type="OMA" id="HRCSWRS"/>
<dbReference type="OrthoDB" id="258806at2759"/>
<dbReference type="PhylomeDB" id="A7TSF4"/>
<dbReference type="Proteomes" id="UP000000267">
    <property type="component" value="Unassembled WGS sequence"/>
</dbReference>
<dbReference type="GO" id="GO:0005737">
    <property type="term" value="C:cytoplasm"/>
    <property type="evidence" value="ECO:0007669"/>
    <property type="project" value="UniProtKB-SubCell"/>
</dbReference>
<dbReference type="GO" id="GO:0005730">
    <property type="term" value="C:nucleolus"/>
    <property type="evidence" value="ECO:0007669"/>
    <property type="project" value="UniProtKB-SubCell"/>
</dbReference>
<dbReference type="GO" id="GO:0106050">
    <property type="term" value="F:tRNA 2'-O-methyltransferase activity"/>
    <property type="evidence" value="ECO:0007669"/>
    <property type="project" value="EnsemblFungi"/>
</dbReference>
<dbReference type="GO" id="GO:0008270">
    <property type="term" value="F:zinc ion binding"/>
    <property type="evidence" value="ECO:0007669"/>
    <property type="project" value="UniProtKB-KW"/>
</dbReference>
<dbReference type="GO" id="GO:0002128">
    <property type="term" value="P:tRNA nucleoside ribose methylation"/>
    <property type="evidence" value="ECO:0007669"/>
    <property type="project" value="EnsemblFungi"/>
</dbReference>
<dbReference type="InterPro" id="IPR007871">
    <property type="entry name" value="Methyltransferase_TRM13"/>
</dbReference>
<dbReference type="InterPro" id="IPR039044">
    <property type="entry name" value="Trm13"/>
</dbReference>
<dbReference type="InterPro" id="IPR022776">
    <property type="entry name" value="TRM13/UPF0224_CHHC_Znf_dom"/>
</dbReference>
<dbReference type="InterPro" id="IPR021721">
    <property type="entry name" value="Znf_CCCH-type_TRM13"/>
</dbReference>
<dbReference type="PANTHER" id="PTHR12998">
    <property type="entry name" value="TRNA:M(4)X MODIFICATION ENZYME TRM13 HOMOLOG"/>
    <property type="match status" value="1"/>
</dbReference>
<dbReference type="PANTHER" id="PTHR12998:SF0">
    <property type="entry name" value="TRNA:M(4)X MODIFICATION ENZYME TRM13 HOMOLOG"/>
    <property type="match status" value="1"/>
</dbReference>
<dbReference type="Pfam" id="PF05206">
    <property type="entry name" value="TRM13"/>
    <property type="match status" value="1"/>
</dbReference>
<dbReference type="Pfam" id="PF11722">
    <property type="entry name" value="zf-TRM13_CCCH"/>
    <property type="match status" value="1"/>
</dbReference>
<dbReference type="Pfam" id="PF05253">
    <property type="entry name" value="zf-U11-48K"/>
    <property type="match status" value="1"/>
</dbReference>
<dbReference type="PROSITE" id="PS51800">
    <property type="entry name" value="ZF_CHHC_U11_48K"/>
    <property type="match status" value="1"/>
</dbReference>
<sequence length="430" mass="50213">MQPESKKQRLQCEFYMEKKKRRCGMSRNLSSKYCSEHQILNENTKRIPCPLDPNHTVWESDLDSHLKKCNKLKLIHQHDNKPYFLKDCNAITTEDSNTTVITKDSLQNWIMKTIPVLKNFFKDDEKNYLSNVPLDIRKNHTMEDKRFPQLNENDNIGKKYHAIQQSSLIQNMIDRNILQFKENSLANFIEFGCGRAELSRYVNQVVIKNSEEKIYNPHFILIDRSTNRMKFDTKMKKDALEFNQNLNPPTITRIRIDIKDLKIDPLLQKDSKYIAISKHLCGVATDLTLRSLTYNPDDNDFLQGVCIAMCCRHVCNSNNYVNPDFVKSIIGNTNTEEQLPYDQFFHALTKIAAWATSGDRPTSSDENNTHFTNLPYTERQELGLMARRVIDQGRCDWLQQKLGESFKVELIRYVEPSISLENVALLAYRK</sequence>
<comment type="function">
    <text evidence="2">tRNA methylase which 2'-O-methylates cytidine(4) in tRNA(Pro) and tRNA(Gly)(GCC), and adenosine(4) in tRNA(His).</text>
</comment>
<comment type="catalytic activity">
    <reaction evidence="2">
        <text>cytidine(4) in tRNA(Pro) + S-adenosyl-L-methionine = 2'-O-methylcytidine(4) in tRNA(Pro) + S-adenosyl-L-homocysteine + H(+)</text>
        <dbReference type="Rhea" id="RHEA:32767"/>
        <dbReference type="Rhea" id="RHEA-COMP:10397"/>
        <dbReference type="Rhea" id="RHEA-COMP:10398"/>
        <dbReference type="ChEBI" id="CHEBI:15378"/>
        <dbReference type="ChEBI" id="CHEBI:57856"/>
        <dbReference type="ChEBI" id="CHEBI:59789"/>
        <dbReference type="ChEBI" id="CHEBI:74495"/>
        <dbReference type="ChEBI" id="CHEBI:82748"/>
        <dbReference type="EC" id="2.1.1.225"/>
    </reaction>
</comment>
<comment type="catalytic activity">
    <reaction evidence="2">
        <text>cytidine(4) in tRNA(Gly)(GCC) + S-adenosyl-L-methionine = 2'-O-methylcytidine(4) in tRNA(Gly)(GCC) + S-adenosyl-L-homocysteine + H(+)</text>
        <dbReference type="Rhea" id="RHEA:43192"/>
        <dbReference type="Rhea" id="RHEA-COMP:10399"/>
        <dbReference type="Rhea" id="RHEA-COMP:10400"/>
        <dbReference type="ChEBI" id="CHEBI:15378"/>
        <dbReference type="ChEBI" id="CHEBI:57856"/>
        <dbReference type="ChEBI" id="CHEBI:59789"/>
        <dbReference type="ChEBI" id="CHEBI:74495"/>
        <dbReference type="ChEBI" id="CHEBI:82748"/>
        <dbReference type="EC" id="2.1.1.225"/>
    </reaction>
</comment>
<comment type="catalytic activity">
    <reaction evidence="2">
        <text>adenosine(4) in tRNA(His) + S-adenosyl-L-methionine = 2'-O-methyladenosine(4) in tRNA(His) + S-adenosyl-L-homocysteine + H(+)</text>
        <dbReference type="Rhea" id="RHEA:43196"/>
        <dbReference type="Rhea" id="RHEA-COMP:10401"/>
        <dbReference type="Rhea" id="RHEA-COMP:10402"/>
        <dbReference type="ChEBI" id="CHEBI:15378"/>
        <dbReference type="ChEBI" id="CHEBI:57856"/>
        <dbReference type="ChEBI" id="CHEBI:59789"/>
        <dbReference type="ChEBI" id="CHEBI:74411"/>
        <dbReference type="ChEBI" id="CHEBI:74477"/>
        <dbReference type="EC" id="2.1.1.225"/>
    </reaction>
</comment>
<comment type="subcellular location">
    <subcellularLocation>
        <location evidence="1">Cytoplasm</location>
    </subcellularLocation>
    <subcellularLocation>
        <location evidence="1">Nucleus</location>
        <location evidence="1">Nucleolus</location>
    </subcellularLocation>
</comment>
<comment type="similarity">
    <text evidence="4">Belongs to the methyltransferase TRM13 family.</text>
</comment>
<gene>
    <name type="primary">TRM13</name>
    <name type="ORF">Kpol_1076p3</name>
</gene>
<protein>
    <recommendedName>
        <fullName>tRNA:m(4)X modification enzyme TRM13</fullName>
        <ecNumber>2.1.1.225</ecNumber>
    </recommendedName>
    <alternativeName>
        <fullName>tRNA methylase 13</fullName>
    </alternativeName>
</protein>
<accession>A7TSF4</accession>
<keyword id="KW-0963">Cytoplasm</keyword>
<keyword id="KW-0479">Metal-binding</keyword>
<keyword id="KW-0489">Methyltransferase</keyword>
<keyword id="KW-0539">Nucleus</keyword>
<keyword id="KW-1185">Reference proteome</keyword>
<keyword id="KW-0949">S-adenosyl-L-methionine</keyword>
<keyword id="KW-0808">Transferase</keyword>
<keyword id="KW-0819">tRNA processing</keyword>
<keyword id="KW-0862">Zinc</keyword>
<keyword id="KW-0863">Zinc-finger</keyword>
<name>TRM13_VANPO</name>
<evidence type="ECO:0000250" key="1"/>
<evidence type="ECO:0000250" key="2">
    <source>
        <dbReference type="UniProtKB" id="Q12383"/>
    </source>
</evidence>
<evidence type="ECO:0000255" key="3">
    <source>
        <dbReference type="PROSITE-ProRule" id="PRU01141"/>
    </source>
</evidence>
<evidence type="ECO:0000305" key="4"/>
<organism>
    <name type="scientific">Vanderwaltozyma polyspora (strain ATCC 22028 / DSM 70294 / BCRC 21397 / CBS 2163 / NBRC 10782 / NRRL Y-8283 / UCD 57-17)</name>
    <name type="common">Kluyveromyces polysporus</name>
    <dbReference type="NCBI Taxonomy" id="436907"/>
    <lineage>
        <taxon>Eukaryota</taxon>
        <taxon>Fungi</taxon>
        <taxon>Dikarya</taxon>
        <taxon>Ascomycota</taxon>
        <taxon>Saccharomycotina</taxon>
        <taxon>Saccharomycetes</taxon>
        <taxon>Saccharomycetales</taxon>
        <taxon>Saccharomycetaceae</taxon>
        <taxon>Vanderwaltozyma</taxon>
    </lineage>
</organism>
<proteinExistence type="inferred from homology"/>
<feature type="chain" id="PRO_0000339428" description="tRNA:m(4)X modification enzyme TRM13">
    <location>
        <begin position="1"/>
        <end position="430"/>
    </location>
</feature>
<feature type="zinc finger region" description="CHHC U11-48K-type" evidence="3">
    <location>
        <begin position="46"/>
        <end position="73"/>
    </location>
</feature>
<feature type="binding site" evidence="3">
    <location>
        <position position="49"/>
    </location>
    <ligand>
        <name>Zn(2+)</name>
        <dbReference type="ChEBI" id="CHEBI:29105"/>
    </ligand>
</feature>
<feature type="binding site" evidence="3">
    <location>
        <position position="55"/>
    </location>
    <ligand>
        <name>Zn(2+)</name>
        <dbReference type="ChEBI" id="CHEBI:29105"/>
    </ligand>
</feature>
<feature type="binding site" evidence="3">
    <location>
        <position position="65"/>
    </location>
    <ligand>
        <name>Zn(2+)</name>
        <dbReference type="ChEBI" id="CHEBI:29105"/>
    </ligand>
</feature>
<feature type="binding site" evidence="3">
    <location>
        <position position="69"/>
    </location>
    <ligand>
        <name>Zn(2+)</name>
        <dbReference type="ChEBI" id="CHEBI:29105"/>
    </ligand>
</feature>
<reference key="1">
    <citation type="journal article" date="2007" name="Proc. Natl. Acad. Sci. U.S.A.">
        <title>Independent sorting-out of thousands of duplicated gene pairs in two yeast species descended from a whole-genome duplication.</title>
        <authorList>
            <person name="Scannell D.R."/>
            <person name="Frank A.C."/>
            <person name="Conant G.C."/>
            <person name="Byrne K.P."/>
            <person name="Woolfit M."/>
            <person name="Wolfe K.H."/>
        </authorList>
    </citation>
    <scope>NUCLEOTIDE SEQUENCE [LARGE SCALE GENOMIC DNA]</scope>
    <source>
        <strain>ATCC 22028 / DSM 70294 / BCRC 21397 / CBS 2163 / NBRC 10782 / NRRL Y-8283 / UCD 57-17</strain>
    </source>
</reference>